<keyword id="KW-0066">ATP synthesis</keyword>
<keyword id="KW-0067">ATP-binding</keyword>
<keyword id="KW-0997">Cell inner membrane</keyword>
<keyword id="KW-1003">Cell membrane</keyword>
<keyword id="KW-0139">CF(1)</keyword>
<keyword id="KW-0375">Hydrogen ion transport</keyword>
<keyword id="KW-0406">Ion transport</keyword>
<keyword id="KW-0472">Membrane</keyword>
<keyword id="KW-0547">Nucleotide-binding</keyword>
<keyword id="KW-1185">Reference proteome</keyword>
<keyword id="KW-1278">Translocase</keyword>
<keyword id="KW-0813">Transport</keyword>
<gene>
    <name evidence="1" type="primary">atpD</name>
    <name type="ordered locus">Jann_1049</name>
</gene>
<reference key="1">
    <citation type="submission" date="2006-02" db="EMBL/GenBank/DDBJ databases">
        <title>Complete sequence of chromosome of Jannaschia sp. CCS1.</title>
        <authorList>
            <consortium name="US DOE Joint Genome Institute"/>
            <person name="Copeland A."/>
            <person name="Lucas S."/>
            <person name="Lapidus A."/>
            <person name="Barry K."/>
            <person name="Detter J.C."/>
            <person name="Glavina del Rio T."/>
            <person name="Hammon N."/>
            <person name="Israni S."/>
            <person name="Pitluck S."/>
            <person name="Brettin T."/>
            <person name="Bruce D."/>
            <person name="Han C."/>
            <person name="Tapia R."/>
            <person name="Gilna P."/>
            <person name="Chertkov O."/>
            <person name="Saunders E."/>
            <person name="Schmutz J."/>
            <person name="Larimer F."/>
            <person name="Land M."/>
            <person name="Kyrpides N."/>
            <person name="Lykidis A."/>
            <person name="Moran M.A."/>
            <person name="Belas R."/>
            <person name="Ye W."/>
            <person name="Buchan A."/>
            <person name="Gonzalez J.M."/>
            <person name="Schell M.A."/>
            <person name="Richardson P."/>
        </authorList>
    </citation>
    <scope>NUCLEOTIDE SEQUENCE [LARGE SCALE GENOMIC DNA]</scope>
    <source>
        <strain>CCS1</strain>
    </source>
</reference>
<sequence length="474" mass="50556">MANAVGKITQVIGAVVDVQFNDHLPEILNALETENDGKRLVLEVAQHLGEGTVRTIAMDSSEGLVRGQEVTDTDGPITVPVGPGTLGRILNVVGEPVDEGGPVDAEERRGIHQDAPEFADQSTEAEVLVTGIKVVDLLAPYSKGGKIGLFGGAGVGKTVLIMELINNIAKVHSGVSVFAGVGERTREGNDLYHEMIESGVIVPDNLPESKIALVYGQMNEPPGARMRIALSGLTLAEQFRDATGADVLFFIDNIFRFTQAGSEVSALLGRIPSAVGYQPTLATDMGTMQERITSTKRGSITSIQAVYVPADDLTDPAPATTFAHLDATTVLSRAISELGIYPAVDPLDSSSRLMDPTIVGDEHYQVARDVQGILQRYKSLQDIIAILGMDELSEEDKLTVARARKIQRFLSQPFDVAKVFTGSDGIQVQLEDTISSFKAVVAGEYDHLPEGAFYMVGGIDEVIAKAEKMAADAA</sequence>
<name>ATPB_JANSC</name>
<feature type="chain" id="PRO_0000254277" description="ATP synthase subunit beta">
    <location>
        <begin position="1"/>
        <end position="474"/>
    </location>
</feature>
<feature type="binding site" evidence="1">
    <location>
        <begin position="151"/>
        <end position="158"/>
    </location>
    <ligand>
        <name>ATP</name>
        <dbReference type="ChEBI" id="CHEBI:30616"/>
    </ligand>
</feature>
<protein>
    <recommendedName>
        <fullName evidence="1">ATP synthase subunit beta</fullName>
        <ecNumber evidence="1">7.1.2.2</ecNumber>
    </recommendedName>
    <alternativeName>
        <fullName evidence="1">ATP synthase F1 sector subunit beta</fullName>
    </alternativeName>
    <alternativeName>
        <fullName evidence="1">F-ATPase subunit beta</fullName>
    </alternativeName>
</protein>
<proteinExistence type="inferred from homology"/>
<organism>
    <name type="scientific">Jannaschia sp. (strain CCS1)</name>
    <dbReference type="NCBI Taxonomy" id="290400"/>
    <lineage>
        <taxon>Bacteria</taxon>
        <taxon>Pseudomonadati</taxon>
        <taxon>Pseudomonadota</taxon>
        <taxon>Alphaproteobacteria</taxon>
        <taxon>Rhodobacterales</taxon>
        <taxon>Roseobacteraceae</taxon>
        <taxon>Jannaschia</taxon>
    </lineage>
</organism>
<comment type="function">
    <text evidence="1">Produces ATP from ADP in the presence of a proton gradient across the membrane. The catalytic sites are hosted primarily by the beta subunits.</text>
</comment>
<comment type="catalytic activity">
    <reaction evidence="1">
        <text>ATP + H2O + 4 H(+)(in) = ADP + phosphate + 5 H(+)(out)</text>
        <dbReference type="Rhea" id="RHEA:57720"/>
        <dbReference type="ChEBI" id="CHEBI:15377"/>
        <dbReference type="ChEBI" id="CHEBI:15378"/>
        <dbReference type="ChEBI" id="CHEBI:30616"/>
        <dbReference type="ChEBI" id="CHEBI:43474"/>
        <dbReference type="ChEBI" id="CHEBI:456216"/>
        <dbReference type="EC" id="7.1.2.2"/>
    </reaction>
</comment>
<comment type="subunit">
    <text evidence="1">F-type ATPases have 2 components, CF(1) - the catalytic core - and CF(0) - the membrane proton channel. CF(1) has five subunits: alpha(3), beta(3), gamma(1), delta(1), epsilon(1). CF(0) has four main subunits: a(1), b(1), b'(1) and c(9-12).</text>
</comment>
<comment type="subcellular location">
    <subcellularLocation>
        <location evidence="1">Cell inner membrane</location>
        <topology evidence="1">Peripheral membrane protein</topology>
    </subcellularLocation>
</comment>
<comment type="similarity">
    <text evidence="1">Belongs to the ATPase alpha/beta chains family.</text>
</comment>
<dbReference type="EC" id="7.1.2.2" evidence="1"/>
<dbReference type="EMBL" id="CP000264">
    <property type="protein sequence ID" value="ABD53966.1"/>
    <property type="molecule type" value="Genomic_DNA"/>
</dbReference>
<dbReference type="RefSeq" id="WP_011454173.1">
    <property type="nucleotide sequence ID" value="NC_007802.1"/>
</dbReference>
<dbReference type="SMR" id="Q28TJ6"/>
<dbReference type="STRING" id="290400.Jann_1049"/>
<dbReference type="KEGG" id="jan:Jann_1049"/>
<dbReference type="eggNOG" id="COG0055">
    <property type="taxonomic scope" value="Bacteria"/>
</dbReference>
<dbReference type="HOGENOM" id="CLU_022398_0_2_5"/>
<dbReference type="OrthoDB" id="9801639at2"/>
<dbReference type="Proteomes" id="UP000008326">
    <property type="component" value="Chromosome"/>
</dbReference>
<dbReference type="GO" id="GO:0005886">
    <property type="term" value="C:plasma membrane"/>
    <property type="evidence" value="ECO:0007669"/>
    <property type="project" value="UniProtKB-SubCell"/>
</dbReference>
<dbReference type="GO" id="GO:0045259">
    <property type="term" value="C:proton-transporting ATP synthase complex"/>
    <property type="evidence" value="ECO:0007669"/>
    <property type="project" value="UniProtKB-KW"/>
</dbReference>
<dbReference type="GO" id="GO:0005524">
    <property type="term" value="F:ATP binding"/>
    <property type="evidence" value="ECO:0007669"/>
    <property type="project" value="UniProtKB-UniRule"/>
</dbReference>
<dbReference type="GO" id="GO:0016887">
    <property type="term" value="F:ATP hydrolysis activity"/>
    <property type="evidence" value="ECO:0007669"/>
    <property type="project" value="InterPro"/>
</dbReference>
<dbReference type="GO" id="GO:0046933">
    <property type="term" value="F:proton-transporting ATP synthase activity, rotational mechanism"/>
    <property type="evidence" value="ECO:0007669"/>
    <property type="project" value="UniProtKB-UniRule"/>
</dbReference>
<dbReference type="CDD" id="cd18110">
    <property type="entry name" value="ATP-synt_F1_beta_C"/>
    <property type="match status" value="1"/>
</dbReference>
<dbReference type="CDD" id="cd18115">
    <property type="entry name" value="ATP-synt_F1_beta_N"/>
    <property type="match status" value="1"/>
</dbReference>
<dbReference type="CDD" id="cd01133">
    <property type="entry name" value="F1-ATPase_beta_CD"/>
    <property type="match status" value="1"/>
</dbReference>
<dbReference type="FunFam" id="1.10.1140.10:FF:000001">
    <property type="entry name" value="ATP synthase subunit beta"/>
    <property type="match status" value="1"/>
</dbReference>
<dbReference type="FunFam" id="2.40.10.170:FF:000005">
    <property type="entry name" value="ATP synthase subunit beta"/>
    <property type="match status" value="1"/>
</dbReference>
<dbReference type="FunFam" id="3.40.50.300:FF:000026">
    <property type="entry name" value="ATP synthase subunit beta"/>
    <property type="match status" value="1"/>
</dbReference>
<dbReference type="Gene3D" id="2.40.10.170">
    <property type="match status" value="1"/>
</dbReference>
<dbReference type="Gene3D" id="1.10.1140.10">
    <property type="entry name" value="Bovine Mitochondrial F1-atpase, Atp Synthase Beta Chain, Chain D, domain 3"/>
    <property type="match status" value="1"/>
</dbReference>
<dbReference type="Gene3D" id="3.40.50.300">
    <property type="entry name" value="P-loop containing nucleotide triphosphate hydrolases"/>
    <property type="match status" value="1"/>
</dbReference>
<dbReference type="HAMAP" id="MF_01347">
    <property type="entry name" value="ATP_synth_beta_bact"/>
    <property type="match status" value="1"/>
</dbReference>
<dbReference type="InterPro" id="IPR003593">
    <property type="entry name" value="AAA+_ATPase"/>
</dbReference>
<dbReference type="InterPro" id="IPR055190">
    <property type="entry name" value="ATP-synt_VA_C"/>
</dbReference>
<dbReference type="InterPro" id="IPR005722">
    <property type="entry name" value="ATP_synth_F1_bsu"/>
</dbReference>
<dbReference type="InterPro" id="IPR020003">
    <property type="entry name" value="ATPase_a/bsu_AS"/>
</dbReference>
<dbReference type="InterPro" id="IPR050053">
    <property type="entry name" value="ATPase_alpha/beta_chains"/>
</dbReference>
<dbReference type="InterPro" id="IPR004100">
    <property type="entry name" value="ATPase_F1/V1/A1_a/bsu_N"/>
</dbReference>
<dbReference type="InterPro" id="IPR036121">
    <property type="entry name" value="ATPase_F1/V1/A1_a/bsu_N_sf"/>
</dbReference>
<dbReference type="InterPro" id="IPR000194">
    <property type="entry name" value="ATPase_F1/V1/A1_a/bsu_nucl-bd"/>
</dbReference>
<dbReference type="InterPro" id="IPR024034">
    <property type="entry name" value="ATPase_F1/V1_b/a_C"/>
</dbReference>
<dbReference type="InterPro" id="IPR027417">
    <property type="entry name" value="P-loop_NTPase"/>
</dbReference>
<dbReference type="NCBIfam" id="TIGR01039">
    <property type="entry name" value="atpD"/>
    <property type="match status" value="1"/>
</dbReference>
<dbReference type="PANTHER" id="PTHR15184">
    <property type="entry name" value="ATP SYNTHASE"/>
    <property type="match status" value="1"/>
</dbReference>
<dbReference type="PANTHER" id="PTHR15184:SF71">
    <property type="entry name" value="ATP SYNTHASE SUBUNIT BETA, MITOCHONDRIAL"/>
    <property type="match status" value="1"/>
</dbReference>
<dbReference type="Pfam" id="PF00006">
    <property type="entry name" value="ATP-synt_ab"/>
    <property type="match status" value="1"/>
</dbReference>
<dbReference type="Pfam" id="PF02874">
    <property type="entry name" value="ATP-synt_ab_N"/>
    <property type="match status" value="1"/>
</dbReference>
<dbReference type="Pfam" id="PF22919">
    <property type="entry name" value="ATP-synt_VA_C"/>
    <property type="match status" value="1"/>
</dbReference>
<dbReference type="PIRSF" id="PIRSF039072">
    <property type="entry name" value="ATPase_subunit_beta"/>
    <property type="match status" value="1"/>
</dbReference>
<dbReference type="SMART" id="SM00382">
    <property type="entry name" value="AAA"/>
    <property type="match status" value="1"/>
</dbReference>
<dbReference type="SUPFAM" id="SSF47917">
    <property type="entry name" value="C-terminal domain of alpha and beta subunits of F1 ATP synthase"/>
    <property type="match status" value="1"/>
</dbReference>
<dbReference type="SUPFAM" id="SSF50615">
    <property type="entry name" value="N-terminal domain of alpha and beta subunits of F1 ATP synthase"/>
    <property type="match status" value="1"/>
</dbReference>
<dbReference type="SUPFAM" id="SSF52540">
    <property type="entry name" value="P-loop containing nucleoside triphosphate hydrolases"/>
    <property type="match status" value="1"/>
</dbReference>
<dbReference type="PROSITE" id="PS00152">
    <property type="entry name" value="ATPASE_ALPHA_BETA"/>
    <property type="match status" value="1"/>
</dbReference>
<accession>Q28TJ6</accession>
<evidence type="ECO:0000255" key="1">
    <source>
        <dbReference type="HAMAP-Rule" id="MF_01347"/>
    </source>
</evidence>